<keyword id="KW-0414">Isoprene biosynthesis</keyword>
<keyword id="KW-0548">Nucleotidyltransferase</keyword>
<keyword id="KW-0808">Transferase</keyword>
<accession>A5W827</accession>
<evidence type="ECO:0000255" key="1">
    <source>
        <dbReference type="HAMAP-Rule" id="MF_00108"/>
    </source>
</evidence>
<sequence length="235" mass="25602">MIDTLPAFWAVIPAAGVGARMAADRPKQYLELAGQTLLEHSLDCFLGHPALKGVVVSIAEDDPYWPGLRYASDPRIQCAAGGRERADSVLNALLVLHAQGAGDSDWVLVHDAARPNLARSDLDKLLSELADDPVGGLLAVPARDTLKRADSHGRVSATVDRSTIWQAYTPQMFRLGALHRALAECLVSDVVVTDEASAIEWSGQAPRLVEGRSDNIKVTRPEDLEWLRQRWAGKR</sequence>
<dbReference type="EC" id="2.7.7.60" evidence="1"/>
<dbReference type="EMBL" id="CP000712">
    <property type="protein sequence ID" value="ABQ80287.1"/>
    <property type="molecule type" value="Genomic_DNA"/>
</dbReference>
<dbReference type="SMR" id="A5W827"/>
<dbReference type="KEGG" id="ppf:Pput_4163"/>
<dbReference type="eggNOG" id="COG1211">
    <property type="taxonomic scope" value="Bacteria"/>
</dbReference>
<dbReference type="HOGENOM" id="CLU_061281_3_1_6"/>
<dbReference type="UniPathway" id="UPA00056">
    <property type="reaction ID" value="UER00093"/>
</dbReference>
<dbReference type="GO" id="GO:0050518">
    <property type="term" value="F:2-C-methyl-D-erythritol 4-phosphate cytidylyltransferase activity"/>
    <property type="evidence" value="ECO:0007669"/>
    <property type="project" value="UniProtKB-UniRule"/>
</dbReference>
<dbReference type="GO" id="GO:0019288">
    <property type="term" value="P:isopentenyl diphosphate biosynthetic process, methylerythritol 4-phosphate pathway"/>
    <property type="evidence" value="ECO:0007669"/>
    <property type="project" value="UniProtKB-UniRule"/>
</dbReference>
<dbReference type="CDD" id="cd02516">
    <property type="entry name" value="CDP-ME_synthetase"/>
    <property type="match status" value="1"/>
</dbReference>
<dbReference type="FunFam" id="3.90.550.10:FF:000003">
    <property type="entry name" value="2-C-methyl-D-erythritol 4-phosphate cytidylyltransferase"/>
    <property type="match status" value="1"/>
</dbReference>
<dbReference type="Gene3D" id="3.90.550.10">
    <property type="entry name" value="Spore Coat Polysaccharide Biosynthesis Protein SpsA, Chain A"/>
    <property type="match status" value="1"/>
</dbReference>
<dbReference type="HAMAP" id="MF_00108">
    <property type="entry name" value="IspD"/>
    <property type="match status" value="1"/>
</dbReference>
<dbReference type="InterPro" id="IPR001228">
    <property type="entry name" value="IspD"/>
</dbReference>
<dbReference type="InterPro" id="IPR034683">
    <property type="entry name" value="IspD/TarI"/>
</dbReference>
<dbReference type="InterPro" id="IPR050088">
    <property type="entry name" value="IspD/TarI_cytidylyltransf_bact"/>
</dbReference>
<dbReference type="InterPro" id="IPR018294">
    <property type="entry name" value="ISPD_synthase_CS"/>
</dbReference>
<dbReference type="InterPro" id="IPR029044">
    <property type="entry name" value="Nucleotide-diphossugar_trans"/>
</dbReference>
<dbReference type="NCBIfam" id="TIGR00453">
    <property type="entry name" value="ispD"/>
    <property type="match status" value="1"/>
</dbReference>
<dbReference type="PANTHER" id="PTHR32125">
    <property type="entry name" value="2-C-METHYL-D-ERYTHRITOL 4-PHOSPHATE CYTIDYLYLTRANSFERASE, CHLOROPLASTIC"/>
    <property type="match status" value="1"/>
</dbReference>
<dbReference type="PANTHER" id="PTHR32125:SF4">
    <property type="entry name" value="2-C-METHYL-D-ERYTHRITOL 4-PHOSPHATE CYTIDYLYLTRANSFERASE, CHLOROPLASTIC"/>
    <property type="match status" value="1"/>
</dbReference>
<dbReference type="Pfam" id="PF01128">
    <property type="entry name" value="IspD"/>
    <property type="match status" value="1"/>
</dbReference>
<dbReference type="SUPFAM" id="SSF53448">
    <property type="entry name" value="Nucleotide-diphospho-sugar transferases"/>
    <property type="match status" value="1"/>
</dbReference>
<dbReference type="PROSITE" id="PS01295">
    <property type="entry name" value="ISPD"/>
    <property type="match status" value="1"/>
</dbReference>
<name>ISPD_PSEP1</name>
<gene>
    <name evidence="1" type="primary">ispD</name>
    <name type="ordered locus">Pput_4163</name>
</gene>
<proteinExistence type="inferred from homology"/>
<comment type="function">
    <text evidence="1">Catalyzes the formation of 4-diphosphocytidyl-2-C-methyl-D-erythritol from CTP and 2-C-methyl-D-erythritol 4-phosphate (MEP).</text>
</comment>
<comment type="catalytic activity">
    <reaction evidence="1">
        <text>2-C-methyl-D-erythritol 4-phosphate + CTP + H(+) = 4-CDP-2-C-methyl-D-erythritol + diphosphate</text>
        <dbReference type="Rhea" id="RHEA:13429"/>
        <dbReference type="ChEBI" id="CHEBI:15378"/>
        <dbReference type="ChEBI" id="CHEBI:33019"/>
        <dbReference type="ChEBI" id="CHEBI:37563"/>
        <dbReference type="ChEBI" id="CHEBI:57823"/>
        <dbReference type="ChEBI" id="CHEBI:58262"/>
        <dbReference type="EC" id="2.7.7.60"/>
    </reaction>
</comment>
<comment type="pathway">
    <text evidence="1">Isoprenoid biosynthesis; isopentenyl diphosphate biosynthesis via DXP pathway; isopentenyl diphosphate from 1-deoxy-D-xylulose 5-phosphate: step 2/6.</text>
</comment>
<comment type="similarity">
    <text evidence="1">Belongs to the IspD/TarI cytidylyltransferase family. IspD subfamily.</text>
</comment>
<reference key="1">
    <citation type="submission" date="2007-05" db="EMBL/GenBank/DDBJ databases">
        <title>Complete sequence of Pseudomonas putida F1.</title>
        <authorList>
            <consortium name="US DOE Joint Genome Institute"/>
            <person name="Copeland A."/>
            <person name="Lucas S."/>
            <person name="Lapidus A."/>
            <person name="Barry K."/>
            <person name="Detter J.C."/>
            <person name="Glavina del Rio T."/>
            <person name="Hammon N."/>
            <person name="Israni S."/>
            <person name="Dalin E."/>
            <person name="Tice H."/>
            <person name="Pitluck S."/>
            <person name="Chain P."/>
            <person name="Malfatti S."/>
            <person name="Shin M."/>
            <person name="Vergez L."/>
            <person name="Schmutz J."/>
            <person name="Larimer F."/>
            <person name="Land M."/>
            <person name="Hauser L."/>
            <person name="Kyrpides N."/>
            <person name="Lykidis A."/>
            <person name="Parales R."/>
            <person name="Richardson P."/>
        </authorList>
    </citation>
    <scope>NUCLEOTIDE SEQUENCE [LARGE SCALE GENOMIC DNA]</scope>
    <source>
        <strain>ATCC 700007 / DSM 6899 / JCM 31910 / BCRC 17059 / LMG 24140 / F1</strain>
    </source>
</reference>
<protein>
    <recommendedName>
        <fullName evidence="1">2-C-methyl-D-erythritol 4-phosphate cytidylyltransferase</fullName>
        <ecNumber evidence="1">2.7.7.60</ecNumber>
    </recommendedName>
    <alternativeName>
        <fullName evidence="1">4-diphosphocytidyl-2C-methyl-D-erythritol synthase</fullName>
    </alternativeName>
    <alternativeName>
        <fullName evidence="1">MEP cytidylyltransferase</fullName>
        <shortName evidence="1">MCT</shortName>
    </alternativeName>
</protein>
<feature type="chain" id="PRO_1000022941" description="2-C-methyl-D-erythritol 4-phosphate cytidylyltransferase">
    <location>
        <begin position="1"/>
        <end position="235"/>
    </location>
</feature>
<feature type="site" description="Transition state stabilizer" evidence="1">
    <location>
        <position position="20"/>
    </location>
</feature>
<feature type="site" description="Transition state stabilizer" evidence="1">
    <location>
        <position position="27"/>
    </location>
</feature>
<feature type="site" description="Positions MEP for the nucleophilic attack" evidence="1">
    <location>
        <position position="161"/>
    </location>
</feature>
<feature type="site" description="Positions MEP for the nucleophilic attack" evidence="1">
    <location>
        <position position="217"/>
    </location>
</feature>
<organism>
    <name type="scientific">Pseudomonas putida (strain ATCC 700007 / DSM 6899 / JCM 31910 / BCRC 17059 / LMG 24140 / F1)</name>
    <dbReference type="NCBI Taxonomy" id="351746"/>
    <lineage>
        <taxon>Bacteria</taxon>
        <taxon>Pseudomonadati</taxon>
        <taxon>Pseudomonadota</taxon>
        <taxon>Gammaproteobacteria</taxon>
        <taxon>Pseudomonadales</taxon>
        <taxon>Pseudomonadaceae</taxon>
        <taxon>Pseudomonas</taxon>
    </lineage>
</organism>